<gene>
    <name evidence="4" type="primary">AMT</name>
</gene>
<sequence>MQRAMTVVPHLGLRLQALPLALGRPLSRAQDVLRRTPLYDFHLAHGGKMVAFAGWSLPVQYRDSHVDSHLHTRRHCSLFDVSHMLQTKILGCDRVKLMESLVVGDIAELRPNQGTLSLFTNEAGGIEDDLIVTSTSEGYLYVVSNAGCWDKDLALMQGKVRELQNMGSDVSLEVVDNALLALQGPTATQVLQAGVADDLRKLPFMTSAVMEVFGVSGCRVTRCGYTGEDGVEISVPAAAAVRLAAALLENPEVKLAGLAARDSLRLEAGLCLYGSDIDEHTTPVEGSLSWTLGKRRRAAMDFPGASVIIAQLKGKVQRRRVGLTCEGAPVRAHSPILNMEGTVIGTVTSGCPSPCLKKNVAMGYVPSEYSRPGTPLLVEVRRKQQMAVVSKMPFVTTNYYTLK</sequence>
<protein>
    <recommendedName>
        <fullName evidence="5">Aminomethyltransferase, mitochondrial</fullName>
        <ecNumber evidence="2 3">2.1.2.10</ecNumber>
    </recommendedName>
    <alternativeName>
        <fullName evidence="3">Glycine cleavage system T protein</fullName>
        <shortName>GCVT</shortName>
    </alternativeName>
</protein>
<dbReference type="EC" id="2.1.2.10" evidence="2 3"/>
<dbReference type="EMBL" id="AJ012166">
    <property type="protein sequence ID" value="CAB62567.1"/>
    <property type="molecule type" value="Genomic_DNA"/>
</dbReference>
<dbReference type="RefSeq" id="NP_001029165.1">
    <property type="nucleotide sequence ID" value="NM_001033993.1"/>
</dbReference>
<dbReference type="RefSeq" id="XP_005632381.1">
    <property type="nucleotide sequence ID" value="XM_005632324.2"/>
</dbReference>
<dbReference type="SMR" id="Q9TSZ7"/>
<dbReference type="FunCoup" id="Q9TSZ7">
    <property type="interactions" value="93"/>
</dbReference>
<dbReference type="STRING" id="9615.ENSCAFP00000030953"/>
<dbReference type="PaxDb" id="9612-ENSCAFP00000030953"/>
<dbReference type="Ensembl" id="ENSCAFT00000035669.4">
    <property type="protein sequence ID" value="ENSCAFP00000030953.2"/>
    <property type="gene ID" value="ENSCAFG00000011489.5"/>
</dbReference>
<dbReference type="Ensembl" id="ENSCAFT00030026179.1">
    <property type="protein sequence ID" value="ENSCAFP00030022862.1"/>
    <property type="gene ID" value="ENSCAFG00030013895.1"/>
</dbReference>
<dbReference type="Ensembl" id="ENSCAFT00040035671.1">
    <property type="protein sequence ID" value="ENSCAFP00040031062.1"/>
    <property type="gene ID" value="ENSCAFG00040018932.1"/>
</dbReference>
<dbReference type="Ensembl" id="ENSCAFT00845046773.1">
    <property type="protein sequence ID" value="ENSCAFP00845036693.1"/>
    <property type="gene ID" value="ENSCAFG00845026162.1"/>
</dbReference>
<dbReference type="GeneID" id="484770"/>
<dbReference type="KEGG" id="cfa:484770"/>
<dbReference type="CTD" id="275"/>
<dbReference type="VEuPathDB" id="HostDB:ENSCAFG00845026162"/>
<dbReference type="VGNC" id="VGNC:54572">
    <property type="gene designation" value="AMT"/>
</dbReference>
<dbReference type="eggNOG" id="KOG2770">
    <property type="taxonomic scope" value="Eukaryota"/>
</dbReference>
<dbReference type="GeneTree" id="ENSGT00940000157524"/>
<dbReference type="HOGENOM" id="CLU_007884_10_0_1"/>
<dbReference type="InParanoid" id="Q9TSZ7"/>
<dbReference type="OMA" id="MPVQYPA"/>
<dbReference type="OrthoDB" id="8789at33554"/>
<dbReference type="TreeFam" id="TF313026"/>
<dbReference type="Reactome" id="R-CFA-6783984">
    <property type="pathway name" value="Glycine degradation"/>
</dbReference>
<dbReference type="SABIO-RK" id="Q9TSZ7"/>
<dbReference type="Proteomes" id="UP000002254">
    <property type="component" value="Chromosome 20"/>
</dbReference>
<dbReference type="Proteomes" id="UP000694429">
    <property type="component" value="Chromosome 20"/>
</dbReference>
<dbReference type="Proteomes" id="UP000694542">
    <property type="component" value="Chromosome 20"/>
</dbReference>
<dbReference type="Proteomes" id="UP000805418">
    <property type="component" value="Chromosome 20"/>
</dbReference>
<dbReference type="Bgee" id="ENSCAFG00000011489">
    <property type="expression patterns" value="Expressed in liver and 48 other cell types or tissues"/>
</dbReference>
<dbReference type="GO" id="GO:0005960">
    <property type="term" value="C:glycine cleavage complex"/>
    <property type="evidence" value="ECO:0007669"/>
    <property type="project" value="InterPro"/>
</dbReference>
<dbReference type="GO" id="GO:0005739">
    <property type="term" value="C:mitochondrion"/>
    <property type="evidence" value="ECO:0000318"/>
    <property type="project" value="GO_Central"/>
</dbReference>
<dbReference type="GO" id="GO:0004047">
    <property type="term" value="F:aminomethyltransferase activity"/>
    <property type="evidence" value="ECO:0000250"/>
    <property type="project" value="UniProtKB"/>
</dbReference>
<dbReference type="GO" id="GO:0008483">
    <property type="term" value="F:transaminase activity"/>
    <property type="evidence" value="ECO:0007669"/>
    <property type="project" value="UniProtKB-KW"/>
</dbReference>
<dbReference type="GO" id="GO:0019464">
    <property type="term" value="P:glycine decarboxylation via glycine cleavage system"/>
    <property type="evidence" value="ECO:0000250"/>
    <property type="project" value="UniProtKB"/>
</dbReference>
<dbReference type="FunFam" id="2.40.30.110:FF:000002">
    <property type="entry name" value="Aminomethyltransferase"/>
    <property type="match status" value="1"/>
</dbReference>
<dbReference type="FunFam" id="3.30.1360.120:FF:000014">
    <property type="entry name" value="Aminomethyltransferase"/>
    <property type="match status" value="1"/>
</dbReference>
<dbReference type="FunFam" id="3.30.70.1400:FF:000001">
    <property type="entry name" value="Aminomethyltransferase"/>
    <property type="match status" value="1"/>
</dbReference>
<dbReference type="FunFam" id="4.10.1250.10:FF:000002">
    <property type="entry name" value="Aminomethyltransferase"/>
    <property type="match status" value="1"/>
</dbReference>
<dbReference type="Gene3D" id="2.40.30.110">
    <property type="entry name" value="Aminomethyltransferase beta-barrel domains"/>
    <property type="match status" value="1"/>
</dbReference>
<dbReference type="Gene3D" id="3.30.70.1400">
    <property type="entry name" value="Aminomethyltransferase beta-barrel domains"/>
    <property type="match status" value="1"/>
</dbReference>
<dbReference type="Gene3D" id="4.10.1250.10">
    <property type="entry name" value="Aminomethyltransferase fragment"/>
    <property type="match status" value="1"/>
</dbReference>
<dbReference type="Gene3D" id="3.30.1360.120">
    <property type="entry name" value="Probable tRNA modification gtpase trme, domain 1"/>
    <property type="match status" value="1"/>
</dbReference>
<dbReference type="InterPro" id="IPR006223">
    <property type="entry name" value="GCS_T"/>
</dbReference>
<dbReference type="InterPro" id="IPR013977">
    <property type="entry name" value="GCST_C"/>
</dbReference>
<dbReference type="InterPro" id="IPR006222">
    <property type="entry name" value="GCV_T_N"/>
</dbReference>
<dbReference type="InterPro" id="IPR028896">
    <property type="entry name" value="GcvT/YgfZ/DmdA"/>
</dbReference>
<dbReference type="InterPro" id="IPR029043">
    <property type="entry name" value="GcvT/YgfZ_C"/>
</dbReference>
<dbReference type="InterPro" id="IPR027266">
    <property type="entry name" value="TrmE/GcvT_dom1"/>
</dbReference>
<dbReference type="NCBIfam" id="TIGR00528">
    <property type="entry name" value="gcvT"/>
    <property type="match status" value="1"/>
</dbReference>
<dbReference type="NCBIfam" id="NF001567">
    <property type="entry name" value="PRK00389.1"/>
    <property type="match status" value="1"/>
</dbReference>
<dbReference type="PANTHER" id="PTHR43757">
    <property type="entry name" value="AMINOMETHYLTRANSFERASE"/>
    <property type="match status" value="1"/>
</dbReference>
<dbReference type="PANTHER" id="PTHR43757:SF16">
    <property type="entry name" value="AMINOMETHYLTRANSFERASE, MITOCHONDRIAL"/>
    <property type="match status" value="1"/>
</dbReference>
<dbReference type="Pfam" id="PF01571">
    <property type="entry name" value="GCV_T"/>
    <property type="match status" value="1"/>
</dbReference>
<dbReference type="Pfam" id="PF08669">
    <property type="entry name" value="GCV_T_C"/>
    <property type="match status" value="1"/>
</dbReference>
<dbReference type="PIRSF" id="PIRSF006487">
    <property type="entry name" value="GcvT"/>
    <property type="match status" value="1"/>
</dbReference>
<dbReference type="SUPFAM" id="SSF101790">
    <property type="entry name" value="Aminomethyltransferase beta-barrel domain"/>
    <property type="match status" value="1"/>
</dbReference>
<dbReference type="SUPFAM" id="SSF103025">
    <property type="entry name" value="Folate-binding domain"/>
    <property type="match status" value="1"/>
</dbReference>
<evidence type="ECO:0000250" key="1">
    <source>
        <dbReference type="UniProtKB" id="P25285"/>
    </source>
</evidence>
<evidence type="ECO:0000250" key="2">
    <source>
        <dbReference type="UniProtKB" id="P28337"/>
    </source>
</evidence>
<evidence type="ECO:0000250" key="3">
    <source>
        <dbReference type="UniProtKB" id="P48728"/>
    </source>
</evidence>
<evidence type="ECO:0000303" key="4">
    <source>
    </source>
</evidence>
<evidence type="ECO:0000305" key="5"/>
<reference key="1">
    <citation type="journal article" date="2000" name="Cytogenet. Cell Genet.">
        <title>Genomic structures and sequences of two closely linked genes (AMT,TCTA) on dog chromosome 20q15.1-q15.2.</title>
        <authorList>
            <person name="Leeb T."/>
            <person name="Breen M."/>
            <person name="Brenig B."/>
        </authorList>
    </citation>
    <scope>NUCLEOTIDE SEQUENCE [GENOMIC DNA]</scope>
</reference>
<feature type="transit peptide" description="Mitochondrion" evidence="1">
    <location>
        <begin position="1"/>
        <end position="28"/>
    </location>
</feature>
<feature type="chain" id="PRO_0000010754" description="Aminomethyltransferase, mitochondrial">
    <location>
        <begin position="29"/>
        <end position="403"/>
    </location>
</feature>
<feature type="binding site" evidence="3">
    <location>
        <position position="232"/>
    </location>
    <ligand>
        <name>substrate</name>
    </ligand>
</feature>
<feature type="binding site" evidence="3">
    <location>
        <position position="261"/>
    </location>
    <ligand>
        <name>substrate</name>
    </ligand>
</feature>
<feature type="binding site" evidence="3">
    <location>
        <position position="399"/>
    </location>
    <ligand>
        <name>substrate</name>
    </ligand>
</feature>
<proteinExistence type="inferred from homology"/>
<comment type="function">
    <text evidence="3">The glycine cleavage system catalyzes the degradation of glycine.</text>
</comment>
<comment type="catalytic activity">
    <reaction evidence="3">
        <text>N(6)-[(R)-S(8)-aminomethyldihydrolipoyl]-L-lysyl-[protein] + (6S)-5,6,7,8-tetrahydrofolate = N(6)-[(R)-dihydrolipoyl]-L-lysyl-[protein] + (6R)-5,10-methylene-5,6,7,8-tetrahydrofolate + NH4(+)</text>
        <dbReference type="Rhea" id="RHEA:16945"/>
        <dbReference type="Rhea" id="RHEA-COMP:10475"/>
        <dbReference type="Rhea" id="RHEA-COMP:10492"/>
        <dbReference type="ChEBI" id="CHEBI:15636"/>
        <dbReference type="ChEBI" id="CHEBI:28938"/>
        <dbReference type="ChEBI" id="CHEBI:57453"/>
        <dbReference type="ChEBI" id="CHEBI:83100"/>
        <dbReference type="ChEBI" id="CHEBI:83143"/>
        <dbReference type="EC" id="2.1.2.10"/>
    </reaction>
</comment>
<comment type="subunit">
    <text evidence="3">The glycine cleavage system is composed of four proteins: P, T, L and H.</text>
</comment>
<comment type="subcellular location">
    <subcellularLocation>
        <location evidence="3">Mitochondrion</location>
    </subcellularLocation>
</comment>
<comment type="similarity">
    <text evidence="5">Belongs to the GcvT family.</text>
</comment>
<organism>
    <name type="scientific">Canis lupus familiaris</name>
    <name type="common">Dog</name>
    <name type="synonym">Canis familiaris</name>
    <dbReference type="NCBI Taxonomy" id="9615"/>
    <lineage>
        <taxon>Eukaryota</taxon>
        <taxon>Metazoa</taxon>
        <taxon>Chordata</taxon>
        <taxon>Craniata</taxon>
        <taxon>Vertebrata</taxon>
        <taxon>Euteleostomi</taxon>
        <taxon>Mammalia</taxon>
        <taxon>Eutheria</taxon>
        <taxon>Laurasiatheria</taxon>
        <taxon>Carnivora</taxon>
        <taxon>Caniformia</taxon>
        <taxon>Canidae</taxon>
        <taxon>Canis</taxon>
    </lineage>
</organism>
<accession>Q9TSZ7</accession>
<keyword id="KW-0032">Aminotransferase</keyword>
<keyword id="KW-0496">Mitochondrion</keyword>
<keyword id="KW-1185">Reference proteome</keyword>
<keyword id="KW-0808">Transferase</keyword>
<keyword id="KW-0809">Transit peptide</keyword>
<name>GCST_CANLF</name>